<dbReference type="EC" id="2.7.4.22" evidence="1"/>
<dbReference type="EMBL" id="CP000142">
    <property type="protein sequence ID" value="ABA89160.1"/>
    <property type="molecule type" value="Genomic_DNA"/>
</dbReference>
<dbReference type="RefSeq" id="WP_011341665.1">
    <property type="nucleotide sequence ID" value="NC_007498.2"/>
</dbReference>
<dbReference type="SMR" id="Q3A397"/>
<dbReference type="STRING" id="338963.Pcar_1919"/>
<dbReference type="KEGG" id="pca:Pcar_1919"/>
<dbReference type="eggNOG" id="COG0528">
    <property type="taxonomic scope" value="Bacteria"/>
</dbReference>
<dbReference type="HOGENOM" id="CLU_033861_0_0_7"/>
<dbReference type="OrthoDB" id="9807458at2"/>
<dbReference type="UniPathway" id="UPA00159">
    <property type="reaction ID" value="UER00275"/>
</dbReference>
<dbReference type="Proteomes" id="UP000002534">
    <property type="component" value="Chromosome"/>
</dbReference>
<dbReference type="GO" id="GO:0005829">
    <property type="term" value="C:cytosol"/>
    <property type="evidence" value="ECO:0007669"/>
    <property type="project" value="TreeGrafter"/>
</dbReference>
<dbReference type="GO" id="GO:0005524">
    <property type="term" value="F:ATP binding"/>
    <property type="evidence" value="ECO:0007669"/>
    <property type="project" value="UniProtKB-KW"/>
</dbReference>
<dbReference type="GO" id="GO:0033862">
    <property type="term" value="F:UMP kinase activity"/>
    <property type="evidence" value="ECO:0007669"/>
    <property type="project" value="UniProtKB-EC"/>
</dbReference>
<dbReference type="GO" id="GO:0044210">
    <property type="term" value="P:'de novo' CTP biosynthetic process"/>
    <property type="evidence" value="ECO:0007669"/>
    <property type="project" value="UniProtKB-UniRule"/>
</dbReference>
<dbReference type="GO" id="GO:0006225">
    <property type="term" value="P:UDP biosynthetic process"/>
    <property type="evidence" value="ECO:0007669"/>
    <property type="project" value="TreeGrafter"/>
</dbReference>
<dbReference type="CDD" id="cd04254">
    <property type="entry name" value="AAK_UMPK-PyrH-Ec"/>
    <property type="match status" value="1"/>
</dbReference>
<dbReference type="FunFam" id="3.40.1160.10:FF:000001">
    <property type="entry name" value="Uridylate kinase"/>
    <property type="match status" value="1"/>
</dbReference>
<dbReference type="Gene3D" id="3.40.1160.10">
    <property type="entry name" value="Acetylglutamate kinase-like"/>
    <property type="match status" value="1"/>
</dbReference>
<dbReference type="HAMAP" id="MF_01220_B">
    <property type="entry name" value="PyrH_B"/>
    <property type="match status" value="1"/>
</dbReference>
<dbReference type="InterPro" id="IPR036393">
    <property type="entry name" value="AceGlu_kinase-like_sf"/>
</dbReference>
<dbReference type="InterPro" id="IPR001048">
    <property type="entry name" value="Asp/Glu/Uridylate_kinase"/>
</dbReference>
<dbReference type="InterPro" id="IPR011817">
    <property type="entry name" value="Uridylate_kinase"/>
</dbReference>
<dbReference type="InterPro" id="IPR015963">
    <property type="entry name" value="Uridylate_kinase_bac"/>
</dbReference>
<dbReference type="NCBIfam" id="TIGR02075">
    <property type="entry name" value="pyrH_bact"/>
    <property type="match status" value="1"/>
</dbReference>
<dbReference type="PANTHER" id="PTHR42833">
    <property type="entry name" value="URIDYLATE KINASE"/>
    <property type="match status" value="1"/>
</dbReference>
<dbReference type="PANTHER" id="PTHR42833:SF4">
    <property type="entry name" value="URIDYLATE KINASE PUMPKIN, CHLOROPLASTIC"/>
    <property type="match status" value="1"/>
</dbReference>
<dbReference type="Pfam" id="PF00696">
    <property type="entry name" value="AA_kinase"/>
    <property type="match status" value="1"/>
</dbReference>
<dbReference type="PIRSF" id="PIRSF005650">
    <property type="entry name" value="Uridylate_kin"/>
    <property type="match status" value="1"/>
</dbReference>
<dbReference type="SUPFAM" id="SSF53633">
    <property type="entry name" value="Carbamate kinase-like"/>
    <property type="match status" value="1"/>
</dbReference>
<name>PYRH_SYNC1</name>
<keyword id="KW-0021">Allosteric enzyme</keyword>
<keyword id="KW-0067">ATP-binding</keyword>
<keyword id="KW-0963">Cytoplasm</keyword>
<keyword id="KW-0418">Kinase</keyword>
<keyword id="KW-0547">Nucleotide-binding</keyword>
<keyword id="KW-0665">Pyrimidine biosynthesis</keyword>
<keyword id="KW-1185">Reference proteome</keyword>
<keyword id="KW-0808">Transferase</keyword>
<proteinExistence type="inferred from homology"/>
<comment type="function">
    <text evidence="1">Catalyzes the reversible phosphorylation of UMP to UDP.</text>
</comment>
<comment type="catalytic activity">
    <reaction evidence="1">
        <text>UMP + ATP = UDP + ADP</text>
        <dbReference type="Rhea" id="RHEA:24400"/>
        <dbReference type="ChEBI" id="CHEBI:30616"/>
        <dbReference type="ChEBI" id="CHEBI:57865"/>
        <dbReference type="ChEBI" id="CHEBI:58223"/>
        <dbReference type="ChEBI" id="CHEBI:456216"/>
        <dbReference type="EC" id="2.7.4.22"/>
    </reaction>
</comment>
<comment type="activity regulation">
    <text evidence="1">Allosterically activated by GTP. Inhibited by UTP.</text>
</comment>
<comment type="pathway">
    <text evidence="1">Pyrimidine metabolism; CTP biosynthesis via de novo pathway; UDP from UMP (UMPK route): step 1/1.</text>
</comment>
<comment type="subunit">
    <text evidence="1">Homohexamer.</text>
</comment>
<comment type="subcellular location">
    <subcellularLocation>
        <location evidence="1">Cytoplasm</location>
    </subcellularLocation>
</comment>
<comment type="similarity">
    <text evidence="1">Belongs to the UMP kinase family.</text>
</comment>
<evidence type="ECO:0000255" key="1">
    <source>
        <dbReference type="HAMAP-Rule" id="MF_01220"/>
    </source>
</evidence>
<organism>
    <name type="scientific">Syntrophotalea carbinolica (strain DSM 2380 / NBRC 103641 / GraBd1)</name>
    <name type="common">Pelobacter carbinolicus</name>
    <dbReference type="NCBI Taxonomy" id="338963"/>
    <lineage>
        <taxon>Bacteria</taxon>
        <taxon>Pseudomonadati</taxon>
        <taxon>Thermodesulfobacteriota</taxon>
        <taxon>Desulfuromonadia</taxon>
        <taxon>Desulfuromonadales</taxon>
        <taxon>Syntrophotaleaceae</taxon>
        <taxon>Syntrophotalea</taxon>
    </lineage>
</organism>
<sequence length="241" mass="25784">MDDQEPVYKRILLKLSGEALAGNQGFGIDPQVISGIAEEIREVIGLGVQVAVVIGGGNIFRGMAAAAGGMDRAGADYMGMLATIMNSLALQDALEQAGVPTRVQTAIEMREVAEPYIRRRAIRHLEKKRVVIFGGGTGNPYFTTDTAASLRAMEIDADVILKATKVDGVYSADPCKDKNAVKFDNLKYLDVLKKGLKVMDATATSLCMDNDLPIVVFQLSRPGNIKKVVLGEAIGTIVKGE</sequence>
<gene>
    <name evidence="1" type="primary">pyrH</name>
    <name type="ordered locus">Pcar_1919</name>
</gene>
<feature type="chain" id="PRO_0000323914" description="Uridylate kinase">
    <location>
        <begin position="1"/>
        <end position="241"/>
    </location>
</feature>
<feature type="region of interest" description="Involved in allosteric activation by GTP" evidence="1">
    <location>
        <begin position="22"/>
        <end position="27"/>
    </location>
</feature>
<feature type="binding site" evidence="1">
    <location>
        <begin position="14"/>
        <end position="17"/>
    </location>
    <ligand>
        <name>ATP</name>
        <dbReference type="ChEBI" id="CHEBI:30616"/>
    </ligand>
</feature>
<feature type="binding site" evidence="1">
    <location>
        <position position="56"/>
    </location>
    <ligand>
        <name>UMP</name>
        <dbReference type="ChEBI" id="CHEBI:57865"/>
    </ligand>
</feature>
<feature type="binding site" evidence="1">
    <location>
        <position position="57"/>
    </location>
    <ligand>
        <name>ATP</name>
        <dbReference type="ChEBI" id="CHEBI:30616"/>
    </ligand>
</feature>
<feature type="binding site" evidence="1">
    <location>
        <position position="61"/>
    </location>
    <ligand>
        <name>ATP</name>
        <dbReference type="ChEBI" id="CHEBI:30616"/>
    </ligand>
</feature>
<feature type="binding site" evidence="1">
    <location>
        <position position="76"/>
    </location>
    <ligand>
        <name>UMP</name>
        <dbReference type="ChEBI" id="CHEBI:57865"/>
    </ligand>
</feature>
<feature type="binding site" evidence="1">
    <location>
        <begin position="137"/>
        <end position="144"/>
    </location>
    <ligand>
        <name>UMP</name>
        <dbReference type="ChEBI" id="CHEBI:57865"/>
    </ligand>
</feature>
<feature type="binding site" evidence="1">
    <location>
        <position position="164"/>
    </location>
    <ligand>
        <name>ATP</name>
        <dbReference type="ChEBI" id="CHEBI:30616"/>
    </ligand>
</feature>
<feature type="binding site" evidence="1">
    <location>
        <position position="170"/>
    </location>
    <ligand>
        <name>ATP</name>
        <dbReference type="ChEBI" id="CHEBI:30616"/>
    </ligand>
</feature>
<feature type="binding site" evidence="1">
    <location>
        <position position="173"/>
    </location>
    <ligand>
        <name>ATP</name>
        <dbReference type="ChEBI" id="CHEBI:30616"/>
    </ligand>
</feature>
<reference key="1">
    <citation type="submission" date="2005-10" db="EMBL/GenBank/DDBJ databases">
        <title>Complete sequence of Pelobacter carbinolicus DSM 2380.</title>
        <authorList>
            <person name="Copeland A."/>
            <person name="Lucas S."/>
            <person name="Lapidus A."/>
            <person name="Barry K."/>
            <person name="Detter J.C."/>
            <person name="Glavina T."/>
            <person name="Hammon N."/>
            <person name="Israni S."/>
            <person name="Pitluck S."/>
            <person name="Chertkov O."/>
            <person name="Schmutz J."/>
            <person name="Larimer F."/>
            <person name="Land M."/>
            <person name="Kyrpides N."/>
            <person name="Ivanova N."/>
            <person name="Richardson P."/>
        </authorList>
    </citation>
    <scope>NUCLEOTIDE SEQUENCE [LARGE SCALE GENOMIC DNA]</scope>
    <source>
        <strain>DSM 2380 / NBRC 103641 / GraBd1</strain>
    </source>
</reference>
<protein>
    <recommendedName>
        <fullName evidence="1">Uridylate kinase</fullName>
        <shortName evidence="1">UK</shortName>
        <ecNumber evidence="1">2.7.4.22</ecNumber>
    </recommendedName>
    <alternativeName>
        <fullName evidence="1">Uridine monophosphate kinase</fullName>
        <shortName evidence="1">UMP kinase</shortName>
        <shortName evidence="1">UMPK</shortName>
    </alternativeName>
</protein>
<accession>Q3A397</accession>